<keyword id="KW-0002">3D-structure</keyword>
<keyword id="KW-0998">Cell outer membrane</keyword>
<keyword id="KW-0133">Cell shape</keyword>
<keyword id="KW-1015">Disulfide bond</keyword>
<keyword id="KW-0449">Lipoprotein</keyword>
<keyword id="KW-0472">Membrane</keyword>
<keyword id="KW-0564">Palmitate</keyword>
<keyword id="KW-0573">Peptidoglycan synthesis</keyword>
<keyword id="KW-1185">Reference proteome</keyword>
<keyword id="KW-0732">Signal</keyword>
<comment type="function">
    <text evidence="1">Regulator of peptidoglycan synthesis that is essential for the function of penicillin-binding protein 1A (PBP1a).</text>
</comment>
<comment type="subunit">
    <text evidence="1">Interacts with PBP1a.</text>
</comment>
<comment type="subcellular location">
    <subcellularLocation>
        <location evidence="1">Cell outer membrane</location>
        <topology evidence="1">Lipid-anchor</topology>
        <orientation evidence="1">Periplasmic side</orientation>
    </subcellularLocation>
</comment>
<comment type="similarity">
    <text evidence="4">Belongs to the LpoA family.</text>
</comment>
<feature type="signal peptide" evidence="2">
    <location>
        <begin position="1"/>
        <end position="25"/>
    </location>
</feature>
<feature type="chain" id="PRO_0000169453" description="Penicillin-binding protein activator LpoA">
    <location>
        <begin position="26"/>
        <end position="575"/>
    </location>
</feature>
<feature type="lipid moiety-binding region" description="N-palmitoyl cysteine" evidence="2">
    <location>
        <position position="26"/>
    </location>
</feature>
<feature type="lipid moiety-binding region" description="S-diacylglycerol cysteine" evidence="2">
    <location>
        <position position="26"/>
    </location>
</feature>
<feature type="disulfide bond" evidence="3">
    <location>
        <begin position="356"/>
        <end position="554"/>
    </location>
</feature>
<feature type="helix" evidence="7">
    <location>
        <begin position="34"/>
        <end position="39"/>
    </location>
</feature>
<feature type="helix" evidence="7">
    <location>
        <begin position="46"/>
        <end position="53"/>
    </location>
</feature>
<feature type="helix" evidence="7">
    <location>
        <begin position="59"/>
        <end position="75"/>
    </location>
</feature>
<feature type="helix" evidence="7">
    <location>
        <begin position="79"/>
        <end position="87"/>
    </location>
</feature>
<feature type="helix" evidence="7">
    <location>
        <begin position="94"/>
        <end position="110"/>
    </location>
</feature>
<feature type="helix" evidence="7">
    <location>
        <begin position="114"/>
        <end position="122"/>
    </location>
</feature>
<feature type="helix" evidence="7">
    <location>
        <begin position="126"/>
        <end position="128"/>
    </location>
</feature>
<feature type="helix" evidence="7">
    <location>
        <begin position="131"/>
        <end position="147"/>
    </location>
</feature>
<feature type="helix" evidence="7">
    <location>
        <begin position="151"/>
        <end position="162"/>
    </location>
</feature>
<feature type="helix" evidence="7">
    <location>
        <begin position="168"/>
        <end position="184"/>
    </location>
</feature>
<feature type="helix" evidence="7">
    <location>
        <begin position="187"/>
        <end position="192"/>
    </location>
</feature>
<feature type="helix" evidence="7">
    <location>
        <begin position="199"/>
        <end position="214"/>
    </location>
</feature>
<feature type="helix" evidence="7">
    <location>
        <begin position="218"/>
        <end position="231"/>
    </location>
</feature>
<feature type="helix" evidence="7">
    <location>
        <begin position="236"/>
        <end position="239"/>
    </location>
</feature>
<feature type="helix" evidence="7">
    <location>
        <begin position="243"/>
        <end position="250"/>
    </location>
</feature>
<feature type="strand" evidence="5">
    <location>
        <begin position="259"/>
        <end position="263"/>
    </location>
</feature>
<feature type="helix" evidence="5">
    <location>
        <begin position="270"/>
        <end position="284"/>
    </location>
</feature>
<feature type="strand" evidence="5">
    <location>
        <begin position="291"/>
        <end position="295"/>
    </location>
</feature>
<feature type="turn" evidence="5">
    <location>
        <begin position="296"/>
        <end position="298"/>
    </location>
</feature>
<feature type="helix" evidence="5">
    <location>
        <begin position="301"/>
        <end position="310"/>
    </location>
</feature>
<feature type="strand" evidence="5">
    <location>
        <begin position="315"/>
        <end position="317"/>
    </location>
</feature>
<feature type="helix" evidence="5">
    <location>
        <begin position="322"/>
        <end position="330"/>
    </location>
</feature>
<feature type="helix" evidence="5">
    <location>
        <begin position="332"/>
        <end position="335"/>
    </location>
</feature>
<feature type="strand" evidence="5">
    <location>
        <begin position="339"/>
        <end position="343"/>
    </location>
</feature>
<feature type="strand" evidence="5">
    <location>
        <begin position="355"/>
        <end position="357"/>
    </location>
</feature>
<feature type="helix" evidence="5">
    <location>
        <begin position="362"/>
        <end position="375"/>
    </location>
</feature>
<feature type="strand" evidence="5">
    <location>
        <begin position="382"/>
        <end position="388"/>
    </location>
</feature>
<feature type="helix" evidence="5">
    <location>
        <begin position="389"/>
        <end position="406"/>
    </location>
</feature>
<feature type="strand" evidence="5">
    <location>
        <begin position="411"/>
        <end position="417"/>
    </location>
</feature>
<feature type="helix" evidence="5">
    <location>
        <begin position="420"/>
        <end position="427"/>
    </location>
</feature>
<feature type="strand" evidence="5">
    <location>
        <begin position="434"/>
        <end position="437"/>
    </location>
</feature>
<feature type="helix" evidence="5">
    <location>
        <begin position="441"/>
        <end position="451"/>
    </location>
</feature>
<feature type="turn" evidence="5">
    <location>
        <begin position="452"/>
        <end position="454"/>
    </location>
</feature>
<feature type="strand" evidence="5">
    <location>
        <begin position="459"/>
        <end position="462"/>
    </location>
</feature>
<feature type="helix" evidence="5">
    <location>
        <begin position="464"/>
        <end position="466"/>
    </location>
</feature>
<feature type="helix" evidence="5">
    <location>
        <begin position="469"/>
        <end position="472"/>
    </location>
</feature>
<feature type="helix" evidence="5">
    <location>
        <begin position="475"/>
        <end position="480"/>
    </location>
</feature>
<feature type="turn" evidence="5">
    <location>
        <begin position="481"/>
        <end position="483"/>
    </location>
</feature>
<feature type="strand" evidence="5">
    <location>
        <begin position="485"/>
        <end position="488"/>
    </location>
</feature>
<feature type="helix" evidence="5">
    <location>
        <begin position="490"/>
        <end position="493"/>
    </location>
</feature>
<feature type="strand" evidence="6">
    <location>
        <begin position="495"/>
        <end position="497"/>
    </location>
</feature>
<feature type="helix" evidence="5">
    <location>
        <begin position="498"/>
        <end position="506"/>
    </location>
</feature>
<feature type="turn" evidence="5">
    <location>
        <begin position="507"/>
        <end position="509"/>
    </location>
</feature>
<feature type="helix" evidence="5">
    <location>
        <begin position="511"/>
        <end position="528"/>
    </location>
</feature>
<feature type="helix" evidence="5">
    <location>
        <begin position="530"/>
        <end position="535"/>
    </location>
</feature>
<feature type="strand" evidence="5">
    <location>
        <begin position="541"/>
        <end position="543"/>
    </location>
</feature>
<feature type="strand" evidence="5">
    <location>
        <begin position="546"/>
        <end position="550"/>
    </location>
</feature>
<feature type="strand" evidence="5">
    <location>
        <begin position="555"/>
        <end position="559"/>
    </location>
</feature>
<feature type="strand" evidence="5">
    <location>
        <begin position="561"/>
        <end position="566"/>
    </location>
</feature>
<feature type="strand" evidence="5">
    <location>
        <begin position="569"/>
        <end position="572"/>
    </location>
</feature>
<gene>
    <name type="primary">lpoA</name>
    <name type="ordered locus">HI_1655</name>
</gene>
<accession>P45299</accession>
<name>LPOA_HAEIN</name>
<sequence>MSILLQGERFKKRLMPILLSMALAGCSNLLGSNFTQTLQKDANASSEFYINKLGQTQELEDQQTYKLLAARVLIRENKVEQSAALLRELGELNDAQKLDRALIEARISAAKNANEVAQNQLRALDLNKLSPSQKSRYYETLAIVAENRKDMIEAVKARIEMDKNLTDVQRHQDNIDKTWALLRSANTGVINNASDEGNAALGGWLTLIKAYNDYIRQPVQLSQALQSWKNAYPNHAAATLFPKELLTLLNFQQTNVSQIGLLLPLSGDGQILGTTIQSGFNDAKGNSTIPVQVFDTSMNSVQDIIAQAKQAGIKTLVGPLLKQNLDVILADPAQIQGMDVLALNATPNSRAIPQLCYYGLSPEDEAESAANKMWNDGVRNPLVAMPQNDLGQRVGNAFNVRWQQLAGTDANIRYYNLPADVTYFVQENNSNTTALYAVASPTELAEMKGYLTNIVPNLAIYASSRASASATNTNTDFIAQMNGVQFSDIPFFKDTNSPQYQKLAKSTGGEYQLMRLYAMGADAWLLINQFNELRQVPGYRLSGLTGILSADTNCNVERDMTWYQYQDGAIVPVAN</sequence>
<dbReference type="EMBL" id="L42023">
    <property type="protein sequence ID" value="AAC23299.1"/>
    <property type="molecule type" value="Genomic_DNA"/>
</dbReference>
<dbReference type="PIR" id="B64174">
    <property type="entry name" value="B64174"/>
</dbReference>
<dbReference type="RefSeq" id="NP_439797.1">
    <property type="nucleotide sequence ID" value="NC_000907.1"/>
</dbReference>
<dbReference type="PDB" id="3CKM">
    <property type="method" value="X-ray"/>
    <property type="resolution" value="1.35 A"/>
    <property type="chains" value="A=256-573"/>
</dbReference>
<dbReference type="PDB" id="4P29">
    <property type="method" value="X-ray"/>
    <property type="resolution" value="1.95 A"/>
    <property type="chains" value="A/B=33-253"/>
</dbReference>
<dbReference type="PDB" id="5KCN">
    <property type="method" value="X-ray"/>
    <property type="resolution" value="1.97 A"/>
    <property type="chains" value="A=33-575"/>
</dbReference>
<dbReference type="PDB" id="5VAT">
    <property type="method" value="X-ray"/>
    <property type="resolution" value="2.60 A"/>
    <property type="chains" value="A/B=33-575"/>
</dbReference>
<dbReference type="PDB" id="5VBG">
    <property type="method" value="X-ray"/>
    <property type="resolution" value="2.80 A"/>
    <property type="chains" value="A=33-575"/>
</dbReference>
<dbReference type="PDB" id="6DCJ">
    <property type="method" value="X-ray"/>
    <property type="resolution" value="1.35 A"/>
    <property type="chains" value="A/B=33-253"/>
</dbReference>
<dbReference type="PDBsum" id="3CKM"/>
<dbReference type="PDBsum" id="4P29"/>
<dbReference type="PDBsum" id="5KCN"/>
<dbReference type="PDBsum" id="5VAT"/>
<dbReference type="PDBsum" id="5VBG"/>
<dbReference type="PDBsum" id="6DCJ"/>
<dbReference type="SMR" id="P45299"/>
<dbReference type="STRING" id="71421.HI_1655"/>
<dbReference type="EnsemblBacteria" id="AAC23299">
    <property type="protein sequence ID" value="AAC23299"/>
    <property type="gene ID" value="HI_1655"/>
</dbReference>
<dbReference type="KEGG" id="hin:HI_1655"/>
<dbReference type="PATRIC" id="fig|71421.8.peg.1733"/>
<dbReference type="eggNOG" id="COG3107">
    <property type="taxonomic scope" value="Bacteria"/>
</dbReference>
<dbReference type="HOGENOM" id="CLU_026091_1_1_6"/>
<dbReference type="OrthoDB" id="6708821at2"/>
<dbReference type="PhylomeDB" id="P45299"/>
<dbReference type="BioCyc" id="HINF71421:G1GJ1-1672-MONOMER"/>
<dbReference type="EvolutionaryTrace" id="P45299"/>
<dbReference type="Proteomes" id="UP000000579">
    <property type="component" value="Chromosome"/>
</dbReference>
<dbReference type="GO" id="GO:0031241">
    <property type="term" value="C:periplasmic side of cell outer membrane"/>
    <property type="evidence" value="ECO:0000318"/>
    <property type="project" value="GO_Central"/>
</dbReference>
<dbReference type="GO" id="GO:0030234">
    <property type="term" value="F:enzyme regulator activity"/>
    <property type="evidence" value="ECO:0000318"/>
    <property type="project" value="GO_Central"/>
</dbReference>
<dbReference type="GO" id="GO:0009252">
    <property type="term" value="P:peptidoglycan biosynthetic process"/>
    <property type="evidence" value="ECO:0000318"/>
    <property type="project" value="GO_Central"/>
</dbReference>
<dbReference type="GO" id="GO:0008360">
    <property type="term" value="P:regulation of cell shape"/>
    <property type="evidence" value="ECO:0007669"/>
    <property type="project" value="UniProtKB-KW"/>
</dbReference>
<dbReference type="CDD" id="cd06339">
    <property type="entry name" value="PBP1_YraM_LppC_lipoprotein-like"/>
    <property type="match status" value="1"/>
</dbReference>
<dbReference type="Gene3D" id="1.25.40.650">
    <property type="match status" value="1"/>
</dbReference>
<dbReference type="Gene3D" id="3.40.50.2300">
    <property type="match status" value="2"/>
</dbReference>
<dbReference type="Gene3D" id="1.25.40.10">
    <property type="entry name" value="Tetratricopeptide repeat domain"/>
    <property type="match status" value="1"/>
</dbReference>
<dbReference type="HAMAP" id="MF_01890">
    <property type="entry name" value="LpoA"/>
    <property type="match status" value="1"/>
</dbReference>
<dbReference type="InterPro" id="IPR007443">
    <property type="entry name" value="LpoA"/>
</dbReference>
<dbReference type="InterPro" id="IPR028082">
    <property type="entry name" value="Peripla_BP_I"/>
</dbReference>
<dbReference type="InterPro" id="IPR011990">
    <property type="entry name" value="TPR-like_helical_dom_sf"/>
</dbReference>
<dbReference type="PANTHER" id="PTHR38038">
    <property type="entry name" value="PENICILLIN-BINDING PROTEIN ACTIVATOR LPOA"/>
    <property type="match status" value="1"/>
</dbReference>
<dbReference type="PANTHER" id="PTHR38038:SF1">
    <property type="entry name" value="PENICILLIN-BINDING PROTEIN ACTIVATOR LPOA"/>
    <property type="match status" value="1"/>
</dbReference>
<dbReference type="Pfam" id="PF04348">
    <property type="entry name" value="LppC"/>
    <property type="match status" value="1"/>
</dbReference>
<dbReference type="SUPFAM" id="SSF53822">
    <property type="entry name" value="Periplasmic binding protein-like I"/>
    <property type="match status" value="1"/>
</dbReference>
<reference key="1">
    <citation type="journal article" date="1995" name="Science">
        <title>Whole-genome random sequencing and assembly of Haemophilus influenzae Rd.</title>
        <authorList>
            <person name="Fleischmann R.D."/>
            <person name="Adams M.D."/>
            <person name="White O."/>
            <person name="Clayton R.A."/>
            <person name="Kirkness E.F."/>
            <person name="Kerlavage A.R."/>
            <person name="Bult C.J."/>
            <person name="Tomb J.-F."/>
            <person name="Dougherty B.A."/>
            <person name="Merrick J.M."/>
            <person name="McKenney K."/>
            <person name="Sutton G.G."/>
            <person name="FitzHugh W."/>
            <person name="Fields C.A."/>
            <person name="Gocayne J.D."/>
            <person name="Scott J.D."/>
            <person name="Shirley R."/>
            <person name="Liu L.-I."/>
            <person name="Glodek A."/>
            <person name="Kelley J.M."/>
            <person name="Weidman J.F."/>
            <person name="Phillips C.A."/>
            <person name="Spriggs T."/>
            <person name="Hedblom E."/>
            <person name="Cotton M.D."/>
            <person name="Utterback T.R."/>
            <person name="Hanna M.C."/>
            <person name="Nguyen D.T."/>
            <person name="Saudek D.M."/>
            <person name="Brandon R.C."/>
            <person name="Fine L.D."/>
            <person name="Fritchman J.L."/>
            <person name="Fuhrmann J.L."/>
            <person name="Geoghagen N.S.M."/>
            <person name="Gnehm C.L."/>
            <person name="McDonald L.A."/>
            <person name="Small K.V."/>
            <person name="Fraser C.M."/>
            <person name="Smith H.O."/>
            <person name="Venter J.C."/>
        </authorList>
    </citation>
    <scope>NUCLEOTIDE SEQUENCE [LARGE SCALE GENOMIC DNA]</scope>
    <source>
        <strain>ATCC 51907 / DSM 11121 / KW20 / Rd</strain>
    </source>
</reference>
<reference key="2">
    <citation type="journal article" date="2008" name="Proteins">
        <title>Structure of YraM, a protein essential for growth of Haemophilus influenzae.</title>
        <authorList>
            <person name="Vijayalakshmi J."/>
            <person name="Akerley B.J."/>
            <person name="Saper M.A."/>
        </authorList>
    </citation>
    <scope>X-RAY CRYSTALLOGRAPHY (1.35 ANGSTROMS) OF 256-573</scope>
    <scope>DISULFIDE BOND</scope>
</reference>
<proteinExistence type="evidence at protein level"/>
<protein>
    <recommendedName>
        <fullName>Penicillin-binding protein activator LpoA</fullName>
        <shortName>PBP activator LpoA</shortName>
    </recommendedName>
</protein>
<evidence type="ECO:0000250" key="1"/>
<evidence type="ECO:0000255" key="2"/>
<evidence type="ECO:0000269" key="3">
    <source>
    </source>
</evidence>
<evidence type="ECO:0000305" key="4"/>
<evidence type="ECO:0007829" key="5">
    <source>
        <dbReference type="PDB" id="3CKM"/>
    </source>
</evidence>
<evidence type="ECO:0007829" key="6">
    <source>
        <dbReference type="PDB" id="5KCN"/>
    </source>
</evidence>
<evidence type="ECO:0007829" key="7">
    <source>
        <dbReference type="PDB" id="6DCJ"/>
    </source>
</evidence>
<organism>
    <name type="scientific">Haemophilus influenzae (strain ATCC 51907 / DSM 11121 / KW20 / Rd)</name>
    <dbReference type="NCBI Taxonomy" id="71421"/>
    <lineage>
        <taxon>Bacteria</taxon>
        <taxon>Pseudomonadati</taxon>
        <taxon>Pseudomonadota</taxon>
        <taxon>Gammaproteobacteria</taxon>
        <taxon>Pasteurellales</taxon>
        <taxon>Pasteurellaceae</taxon>
        <taxon>Haemophilus</taxon>
    </lineage>
</organism>